<accession>Q0AMI4</accession>
<sequence length="149" mass="16707">MSTITIHTDGACSGNPGPGGWGAILEWNGHRKELKGGEADTTNNRMEMMAAIQALEALRKADRSVILITDSVYLRDGITKWIHGWKKRGWKTADKKPVKNVDLWQRLDELTRSHTIDWRWVKGHAGDPGNERADELAREGLAEARGRQP</sequence>
<dbReference type="EC" id="3.1.26.4" evidence="1"/>
<dbReference type="EMBL" id="CP000449">
    <property type="protein sequence ID" value="ABI66509.1"/>
    <property type="molecule type" value="Genomic_DNA"/>
</dbReference>
<dbReference type="RefSeq" id="WP_011644154.1">
    <property type="nucleotide sequence ID" value="NC_008347.1"/>
</dbReference>
<dbReference type="SMR" id="Q0AMI4"/>
<dbReference type="STRING" id="394221.Mmar10_2217"/>
<dbReference type="KEGG" id="mmr:Mmar10_2217"/>
<dbReference type="eggNOG" id="COG0328">
    <property type="taxonomic scope" value="Bacteria"/>
</dbReference>
<dbReference type="HOGENOM" id="CLU_030894_6_0_5"/>
<dbReference type="OrthoDB" id="7845843at2"/>
<dbReference type="Proteomes" id="UP000001964">
    <property type="component" value="Chromosome"/>
</dbReference>
<dbReference type="GO" id="GO:0005737">
    <property type="term" value="C:cytoplasm"/>
    <property type="evidence" value="ECO:0007669"/>
    <property type="project" value="UniProtKB-SubCell"/>
</dbReference>
<dbReference type="GO" id="GO:0000287">
    <property type="term" value="F:magnesium ion binding"/>
    <property type="evidence" value="ECO:0007669"/>
    <property type="project" value="UniProtKB-UniRule"/>
</dbReference>
<dbReference type="GO" id="GO:0003676">
    <property type="term" value="F:nucleic acid binding"/>
    <property type="evidence" value="ECO:0007669"/>
    <property type="project" value="InterPro"/>
</dbReference>
<dbReference type="GO" id="GO:0004523">
    <property type="term" value="F:RNA-DNA hybrid ribonuclease activity"/>
    <property type="evidence" value="ECO:0007669"/>
    <property type="project" value="UniProtKB-UniRule"/>
</dbReference>
<dbReference type="GO" id="GO:0043137">
    <property type="term" value="P:DNA replication, removal of RNA primer"/>
    <property type="evidence" value="ECO:0007669"/>
    <property type="project" value="TreeGrafter"/>
</dbReference>
<dbReference type="CDD" id="cd09278">
    <property type="entry name" value="RNase_HI_prokaryote_like"/>
    <property type="match status" value="1"/>
</dbReference>
<dbReference type="FunFam" id="3.30.420.10:FF:000089">
    <property type="entry name" value="Ribonuclease H"/>
    <property type="match status" value="1"/>
</dbReference>
<dbReference type="Gene3D" id="3.30.420.10">
    <property type="entry name" value="Ribonuclease H-like superfamily/Ribonuclease H"/>
    <property type="match status" value="1"/>
</dbReference>
<dbReference type="HAMAP" id="MF_00042">
    <property type="entry name" value="RNase_H"/>
    <property type="match status" value="1"/>
</dbReference>
<dbReference type="InterPro" id="IPR050092">
    <property type="entry name" value="RNase_H"/>
</dbReference>
<dbReference type="InterPro" id="IPR012337">
    <property type="entry name" value="RNaseH-like_sf"/>
</dbReference>
<dbReference type="InterPro" id="IPR002156">
    <property type="entry name" value="RNaseH_domain"/>
</dbReference>
<dbReference type="InterPro" id="IPR036397">
    <property type="entry name" value="RNaseH_sf"/>
</dbReference>
<dbReference type="InterPro" id="IPR022892">
    <property type="entry name" value="RNaseHI"/>
</dbReference>
<dbReference type="NCBIfam" id="NF001236">
    <property type="entry name" value="PRK00203.1"/>
    <property type="match status" value="1"/>
</dbReference>
<dbReference type="PANTHER" id="PTHR10642">
    <property type="entry name" value="RIBONUCLEASE H1"/>
    <property type="match status" value="1"/>
</dbReference>
<dbReference type="PANTHER" id="PTHR10642:SF26">
    <property type="entry name" value="RIBONUCLEASE H1"/>
    <property type="match status" value="1"/>
</dbReference>
<dbReference type="Pfam" id="PF00075">
    <property type="entry name" value="RNase_H"/>
    <property type="match status" value="1"/>
</dbReference>
<dbReference type="SUPFAM" id="SSF53098">
    <property type="entry name" value="Ribonuclease H-like"/>
    <property type="match status" value="1"/>
</dbReference>
<dbReference type="PROSITE" id="PS50879">
    <property type="entry name" value="RNASE_H_1"/>
    <property type="match status" value="1"/>
</dbReference>
<organism>
    <name type="scientific">Maricaulis maris (strain MCS10)</name>
    <name type="common">Caulobacter maris</name>
    <dbReference type="NCBI Taxonomy" id="394221"/>
    <lineage>
        <taxon>Bacteria</taxon>
        <taxon>Pseudomonadati</taxon>
        <taxon>Pseudomonadota</taxon>
        <taxon>Alphaproteobacteria</taxon>
        <taxon>Maricaulales</taxon>
        <taxon>Maricaulaceae</taxon>
        <taxon>Maricaulis</taxon>
    </lineage>
</organism>
<proteinExistence type="inferred from homology"/>
<feature type="chain" id="PRO_0000332624" description="Ribonuclease H">
    <location>
        <begin position="1"/>
        <end position="149"/>
    </location>
</feature>
<feature type="domain" description="RNase H type-1" evidence="2">
    <location>
        <begin position="1"/>
        <end position="142"/>
    </location>
</feature>
<feature type="region of interest" description="Disordered" evidence="3">
    <location>
        <begin position="124"/>
        <end position="149"/>
    </location>
</feature>
<feature type="compositionally biased region" description="Basic and acidic residues" evidence="3">
    <location>
        <begin position="129"/>
        <end position="149"/>
    </location>
</feature>
<feature type="binding site" evidence="1">
    <location>
        <position position="9"/>
    </location>
    <ligand>
        <name>Mg(2+)</name>
        <dbReference type="ChEBI" id="CHEBI:18420"/>
        <label>1</label>
    </ligand>
</feature>
<feature type="binding site" evidence="1">
    <location>
        <position position="9"/>
    </location>
    <ligand>
        <name>Mg(2+)</name>
        <dbReference type="ChEBI" id="CHEBI:18420"/>
        <label>2</label>
    </ligand>
</feature>
<feature type="binding site" evidence="1">
    <location>
        <position position="47"/>
    </location>
    <ligand>
        <name>Mg(2+)</name>
        <dbReference type="ChEBI" id="CHEBI:18420"/>
        <label>1</label>
    </ligand>
</feature>
<feature type="binding site" evidence="1">
    <location>
        <position position="70"/>
    </location>
    <ligand>
        <name>Mg(2+)</name>
        <dbReference type="ChEBI" id="CHEBI:18420"/>
        <label>1</label>
    </ligand>
</feature>
<feature type="binding site" evidence="1">
    <location>
        <position position="134"/>
    </location>
    <ligand>
        <name>Mg(2+)</name>
        <dbReference type="ChEBI" id="CHEBI:18420"/>
        <label>2</label>
    </ligand>
</feature>
<gene>
    <name evidence="1" type="primary">rnhA</name>
    <name type="ordered locus">Mmar10_2217</name>
</gene>
<comment type="function">
    <text evidence="1">Endonuclease that specifically degrades the RNA of RNA-DNA hybrids.</text>
</comment>
<comment type="catalytic activity">
    <reaction evidence="1">
        <text>Endonucleolytic cleavage to 5'-phosphomonoester.</text>
        <dbReference type="EC" id="3.1.26.4"/>
    </reaction>
</comment>
<comment type="cofactor">
    <cofactor evidence="1">
        <name>Mg(2+)</name>
        <dbReference type="ChEBI" id="CHEBI:18420"/>
    </cofactor>
    <text evidence="1">Binds 1 Mg(2+) ion per subunit. May bind a second metal ion at a regulatory site, or after substrate binding.</text>
</comment>
<comment type="subunit">
    <text evidence="1">Monomer.</text>
</comment>
<comment type="subcellular location">
    <subcellularLocation>
        <location evidence="1">Cytoplasm</location>
    </subcellularLocation>
</comment>
<comment type="similarity">
    <text evidence="1">Belongs to the RNase H family.</text>
</comment>
<reference key="1">
    <citation type="submission" date="2006-08" db="EMBL/GenBank/DDBJ databases">
        <title>Complete sequence of Maricaulis maris MCS10.</title>
        <authorList>
            <consortium name="US DOE Joint Genome Institute"/>
            <person name="Copeland A."/>
            <person name="Lucas S."/>
            <person name="Lapidus A."/>
            <person name="Barry K."/>
            <person name="Detter J.C."/>
            <person name="Glavina del Rio T."/>
            <person name="Hammon N."/>
            <person name="Israni S."/>
            <person name="Dalin E."/>
            <person name="Tice H."/>
            <person name="Pitluck S."/>
            <person name="Saunders E."/>
            <person name="Brettin T."/>
            <person name="Bruce D."/>
            <person name="Han C."/>
            <person name="Tapia R."/>
            <person name="Gilna P."/>
            <person name="Schmutz J."/>
            <person name="Larimer F."/>
            <person name="Land M."/>
            <person name="Hauser L."/>
            <person name="Kyrpides N."/>
            <person name="Mikhailova N."/>
            <person name="Viollier P."/>
            <person name="Stephens C."/>
            <person name="Richardson P."/>
        </authorList>
    </citation>
    <scope>NUCLEOTIDE SEQUENCE [LARGE SCALE GENOMIC DNA]</scope>
    <source>
        <strain>MCS10</strain>
    </source>
</reference>
<keyword id="KW-0963">Cytoplasm</keyword>
<keyword id="KW-0255">Endonuclease</keyword>
<keyword id="KW-0378">Hydrolase</keyword>
<keyword id="KW-0460">Magnesium</keyword>
<keyword id="KW-0479">Metal-binding</keyword>
<keyword id="KW-0540">Nuclease</keyword>
<keyword id="KW-1185">Reference proteome</keyword>
<name>RNH_MARMM</name>
<evidence type="ECO:0000255" key="1">
    <source>
        <dbReference type="HAMAP-Rule" id="MF_00042"/>
    </source>
</evidence>
<evidence type="ECO:0000255" key="2">
    <source>
        <dbReference type="PROSITE-ProRule" id="PRU00408"/>
    </source>
</evidence>
<evidence type="ECO:0000256" key="3">
    <source>
        <dbReference type="SAM" id="MobiDB-lite"/>
    </source>
</evidence>
<protein>
    <recommendedName>
        <fullName evidence="1">Ribonuclease H</fullName>
        <shortName evidence="1">RNase H</shortName>
        <ecNumber evidence="1">3.1.26.4</ecNumber>
    </recommendedName>
</protein>